<dbReference type="EMBL" id="AE016879">
    <property type="protein sequence ID" value="AAP29268.1"/>
    <property type="molecule type" value="Genomic_DNA"/>
</dbReference>
<dbReference type="EMBL" id="AE017225">
    <property type="protein sequence ID" value="AAT57522.1"/>
    <property type="status" value="ALT_INIT"/>
    <property type="molecule type" value="Genomic_DNA"/>
</dbReference>
<dbReference type="EMBL" id="AE017334">
    <property type="protein sequence ID" value="AAT34782.2"/>
    <property type="molecule type" value="Genomic_DNA"/>
</dbReference>
<dbReference type="RefSeq" id="NP_847782.1">
    <property type="nucleotide sequence ID" value="NC_003997.3"/>
</dbReference>
<dbReference type="RefSeq" id="WP_000526077.1">
    <property type="nucleotide sequence ID" value="NZ_WXXJ01000017.1"/>
</dbReference>
<dbReference type="RefSeq" id="YP_031472.1">
    <property type="nucleotide sequence ID" value="NC_005945.1"/>
</dbReference>
<dbReference type="SMR" id="Q81JR8"/>
<dbReference type="STRING" id="261594.GBAA_5632"/>
<dbReference type="DNASU" id="1085349"/>
<dbReference type="KEGG" id="ban:BA_5632"/>
<dbReference type="KEGG" id="bar:GBAA_5632"/>
<dbReference type="KEGG" id="bat:BAS5234"/>
<dbReference type="PATRIC" id="fig|198094.11.peg.5591"/>
<dbReference type="eggNOG" id="COG4844">
    <property type="taxonomic scope" value="Bacteria"/>
</dbReference>
<dbReference type="HOGENOM" id="CLU_163820_1_0_9"/>
<dbReference type="OMA" id="EIGCQSY"/>
<dbReference type="OrthoDB" id="1645211at2"/>
<dbReference type="Proteomes" id="UP000000427">
    <property type="component" value="Chromosome"/>
</dbReference>
<dbReference type="Proteomes" id="UP000000594">
    <property type="component" value="Chromosome"/>
</dbReference>
<dbReference type="HAMAP" id="MF_01863">
    <property type="entry name" value="UPF0741"/>
    <property type="match status" value="1"/>
</dbReference>
<dbReference type="InterPro" id="IPR009910">
    <property type="entry name" value="DUF1450"/>
</dbReference>
<dbReference type="InterPro" id="IPR020880">
    <property type="entry name" value="UPF0741"/>
</dbReference>
<dbReference type="Pfam" id="PF07293">
    <property type="entry name" value="DUF1450"/>
    <property type="match status" value="1"/>
</dbReference>
<accession>Q81JR8</accession>
<accession>Q6HQB6</accession>
<accession>Q6KJP7</accession>
<name>Y5632_BACAN</name>
<evidence type="ECO:0000255" key="1">
    <source>
        <dbReference type="HAMAP-Rule" id="MF_01863"/>
    </source>
</evidence>
<evidence type="ECO:0000305" key="2"/>
<organism>
    <name type="scientific">Bacillus anthracis</name>
    <dbReference type="NCBI Taxonomy" id="1392"/>
    <lineage>
        <taxon>Bacteria</taxon>
        <taxon>Bacillati</taxon>
        <taxon>Bacillota</taxon>
        <taxon>Bacilli</taxon>
        <taxon>Bacillales</taxon>
        <taxon>Bacillaceae</taxon>
        <taxon>Bacillus</taxon>
        <taxon>Bacillus cereus group</taxon>
    </lineage>
</organism>
<protein>
    <recommendedName>
        <fullName evidence="1">UPF0741 protein BA_5632/GBAA_5632/BAS5234</fullName>
    </recommendedName>
</protein>
<comment type="similarity">
    <text evidence="1">Belongs to the UPF0741 family.</text>
</comment>
<comment type="sequence caution" evidence="2">
    <conflict type="erroneous initiation">
        <sequence resource="EMBL-CDS" id="AAT57522"/>
    </conflict>
</comment>
<proteinExistence type="inferred from homology"/>
<gene>
    <name type="ordered locus">BA_5632</name>
    <name type="ordered locus">GBAA_5632</name>
    <name type="ordered locus">BAS5234</name>
</gene>
<reference key="1">
    <citation type="journal article" date="2003" name="Nature">
        <title>The genome sequence of Bacillus anthracis Ames and comparison to closely related bacteria.</title>
        <authorList>
            <person name="Read T.D."/>
            <person name="Peterson S.N."/>
            <person name="Tourasse N.J."/>
            <person name="Baillie L.W."/>
            <person name="Paulsen I.T."/>
            <person name="Nelson K.E."/>
            <person name="Tettelin H."/>
            <person name="Fouts D.E."/>
            <person name="Eisen J.A."/>
            <person name="Gill S.R."/>
            <person name="Holtzapple E.K."/>
            <person name="Okstad O.A."/>
            <person name="Helgason E."/>
            <person name="Rilstone J."/>
            <person name="Wu M."/>
            <person name="Kolonay J.F."/>
            <person name="Beanan M.J."/>
            <person name="Dodson R.J."/>
            <person name="Brinkac L.M."/>
            <person name="Gwinn M.L."/>
            <person name="DeBoy R.T."/>
            <person name="Madpu R."/>
            <person name="Daugherty S.C."/>
            <person name="Durkin A.S."/>
            <person name="Haft D.H."/>
            <person name="Nelson W.C."/>
            <person name="Peterson J.D."/>
            <person name="Pop M."/>
            <person name="Khouri H.M."/>
            <person name="Radune D."/>
            <person name="Benton J.L."/>
            <person name="Mahamoud Y."/>
            <person name="Jiang L."/>
            <person name="Hance I.R."/>
            <person name="Weidman J.F."/>
            <person name="Berry K.J."/>
            <person name="Plaut R.D."/>
            <person name="Wolf A.M."/>
            <person name="Watkins K.L."/>
            <person name="Nierman W.C."/>
            <person name="Hazen A."/>
            <person name="Cline R.T."/>
            <person name="Redmond C."/>
            <person name="Thwaite J.E."/>
            <person name="White O."/>
            <person name="Salzberg S.L."/>
            <person name="Thomason B."/>
            <person name="Friedlander A.M."/>
            <person name="Koehler T.M."/>
            <person name="Hanna P.C."/>
            <person name="Kolstoe A.-B."/>
            <person name="Fraser C.M."/>
        </authorList>
    </citation>
    <scope>NUCLEOTIDE SEQUENCE [LARGE SCALE GENOMIC DNA]</scope>
    <source>
        <strain>Ames / isolate Porton</strain>
    </source>
</reference>
<reference key="2">
    <citation type="submission" date="2004-01" db="EMBL/GenBank/DDBJ databases">
        <title>Complete genome sequence of Bacillus anthracis Sterne.</title>
        <authorList>
            <person name="Brettin T.S."/>
            <person name="Bruce D."/>
            <person name="Challacombe J.F."/>
            <person name="Gilna P."/>
            <person name="Han C."/>
            <person name="Hill K."/>
            <person name="Hitchcock P."/>
            <person name="Jackson P."/>
            <person name="Keim P."/>
            <person name="Longmire J."/>
            <person name="Lucas S."/>
            <person name="Okinaka R."/>
            <person name="Richardson P."/>
            <person name="Rubin E."/>
            <person name="Tice H."/>
        </authorList>
    </citation>
    <scope>NUCLEOTIDE SEQUENCE [LARGE SCALE GENOMIC DNA]</scope>
    <source>
        <strain>Sterne</strain>
    </source>
</reference>
<reference key="3">
    <citation type="journal article" date="2009" name="J. Bacteriol.">
        <title>The complete genome sequence of Bacillus anthracis Ames 'Ancestor'.</title>
        <authorList>
            <person name="Ravel J."/>
            <person name="Jiang L."/>
            <person name="Stanley S.T."/>
            <person name="Wilson M.R."/>
            <person name="Decker R.S."/>
            <person name="Read T.D."/>
            <person name="Worsham P."/>
            <person name="Keim P.S."/>
            <person name="Salzberg S.L."/>
            <person name="Fraser-Liggett C.M."/>
            <person name="Rasko D.A."/>
        </authorList>
    </citation>
    <scope>NUCLEOTIDE SEQUENCE [LARGE SCALE GENOMIC DNA]</scope>
    <source>
        <strain>Ames ancestor</strain>
    </source>
</reference>
<feature type="chain" id="PRO_0000372725" description="UPF0741 protein BA_5632/GBAA_5632/BAS5234">
    <location>
        <begin position="1"/>
        <end position="74"/>
    </location>
</feature>
<keyword id="KW-1185">Reference proteome</keyword>
<sequence>MGNEFRVCDDCQATNVKTLIPKLKKVDSCATIEVGCQSYCGPGRKKSFAFVNNRPVAAPTEDELIVKIEAKLNK</sequence>